<reference key="1">
    <citation type="submission" date="2007-04" db="EMBL/GenBank/DDBJ databases">
        <title>Genome sequence of the thermophilic hydrogen-producing bacterium Caldicellulosiruptor saccharolyticus DSM 8903.</title>
        <authorList>
            <person name="Copeland A."/>
            <person name="Lucas S."/>
            <person name="Lapidus A."/>
            <person name="Barry K."/>
            <person name="Detter J.C."/>
            <person name="Glavina del Rio T."/>
            <person name="Hammon N."/>
            <person name="Israni S."/>
            <person name="Dalin E."/>
            <person name="Tice H."/>
            <person name="Pitluck S."/>
            <person name="Kiss H."/>
            <person name="Brettin T."/>
            <person name="Bruce D."/>
            <person name="Han C."/>
            <person name="Schmutz J."/>
            <person name="Larimer F."/>
            <person name="Land M."/>
            <person name="Hauser L."/>
            <person name="Kyrpides N."/>
            <person name="Lykidis A."/>
            <person name="van de Werken H.J.G."/>
            <person name="Verhaart M.R.A."/>
            <person name="VanFossen A.L."/>
            <person name="Lewis D.L."/>
            <person name="Nichols J.D."/>
            <person name="Goorissen H.P."/>
            <person name="van Niel E.W.J."/>
            <person name="Stams F.J.M."/>
            <person name="Willquist K.U."/>
            <person name="Ward D.E."/>
            <person name="van der Oost J."/>
            <person name="Kelly R.M."/>
            <person name="Kengen S.M.W."/>
            <person name="Richardson P."/>
        </authorList>
    </citation>
    <scope>NUCLEOTIDE SEQUENCE [LARGE SCALE GENOMIC DNA]</scope>
    <source>
        <strain>ATCC 43494 / DSM 8903 / Tp8T 6331</strain>
    </source>
</reference>
<comment type="function">
    <text evidence="1">Transaldolase is important for the balance of metabolites in the pentose-phosphate pathway.</text>
</comment>
<comment type="catalytic activity">
    <reaction evidence="1">
        <text>D-sedoheptulose 7-phosphate + D-glyceraldehyde 3-phosphate = D-erythrose 4-phosphate + beta-D-fructose 6-phosphate</text>
        <dbReference type="Rhea" id="RHEA:17053"/>
        <dbReference type="ChEBI" id="CHEBI:16897"/>
        <dbReference type="ChEBI" id="CHEBI:57483"/>
        <dbReference type="ChEBI" id="CHEBI:57634"/>
        <dbReference type="ChEBI" id="CHEBI:59776"/>
        <dbReference type="EC" id="2.2.1.2"/>
    </reaction>
</comment>
<comment type="pathway">
    <text evidence="1">Carbohydrate degradation; pentose phosphate pathway; D-glyceraldehyde 3-phosphate and beta-D-fructose 6-phosphate from D-ribose 5-phosphate and D-xylulose 5-phosphate (non-oxidative stage): step 2/3.</text>
</comment>
<comment type="subcellular location">
    <subcellularLocation>
        <location evidence="1">Cytoplasm</location>
    </subcellularLocation>
</comment>
<comment type="similarity">
    <text evidence="1">Belongs to the transaldolase family. Type 3B subfamily.</text>
</comment>
<sequence length="217" mass="23735">MKLFIDTANINEIKEAYSWGIICGVTTNPSLIAKEGRDFKEVVNEICSIVDGPISAEVISLKAEGMIEEARDLAKIHKNVVIKIPMTTEGLKAVSVLSKEGIKTNVTLIFSAAQALLAAKAGATYVSPFVGRLDDIGQNGIELIKEIVQIFRNYPDIKTEIIAASIRHPIHVIEAAKAGADIATVPFKVLEQMTKHALTDIGIERFLKDWEKVPKKN</sequence>
<name>TAL_CALS8</name>
<organism>
    <name type="scientific">Caldicellulosiruptor saccharolyticus (strain ATCC 43494 / DSM 8903 / Tp8T 6331)</name>
    <dbReference type="NCBI Taxonomy" id="351627"/>
    <lineage>
        <taxon>Bacteria</taxon>
        <taxon>Bacillati</taxon>
        <taxon>Bacillota</taxon>
        <taxon>Bacillota incertae sedis</taxon>
        <taxon>Caldicellulosiruptorales</taxon>
        <taxon>Caldicellulosiruptoraceae</taxon>
        <taxon>Caldicellulosiruptor</taxon>
    </lineage>
</organism>
<keyword id="KW-0963">Cytoplasm</keyword>
<keyword id="KW-0570">Pentose shunt</keyword>
<keyword id="KW-0704">Schiff base</keyword>
<keyword id="KW-0808">Transferase</keyword>
<feature type="chain" id="PRO_1000060462" description="Probable transaldolase">
    <location>
        <begin position="1"/>
        <end position="217"/>
    </location>
</feature>
<feature type="active site" description="Schiff-base intermediate with substrate" evidence="1">
    <location>
        <position position="83"/>
    </location>
</feature>
<protein>
    <recommendedName>
        <fullName evidence="1">Probable transaldolase</fullName>
        <ecNumber evidence="1">2.2.1.2</ecNumber>
    </recommendedName>
</protein>
<gene>
    <name evidence="1" type="primary">tal</name>
    <name type="ordered locus">Csac_2036</name>
</gene>
<dbReference type="EC" id="2.2.1.2" evidence="1"/>
<dbReference type="EMBL" id="CP000679">
    <property type="protein sequence ID" value="ABP67621.1"/>
    <property type="molecule type" value="Genomic_DNA"/>
</dbReference>
<dbReference type="RefSeq" id="WP_011917556.1">
    <property type="nucleotide sequence ID" value="NC_009437.1"/>
</dbReference>
<dbReference type="SMR" id="A4XL36"/>
<dbReference type="STRING" id="351627.Csac_2036"/>
<dbReference type="KEGG" id="csc:Csac_2036"/>
<dbReference type="eggNOG" id="COG0176">
    <property type="taxonomic scope" value="Bacteria"/>
</dbReference>
<dbReference type="HOGENOM" id="CLU_079764_0_0_9"/>
<dbReference type="OrthoDB" id="9807051at2"/>
<dbReference type="UniPathway" id="UPA00115">
    <property type="reaction ID" value="UER00414"/>
</dbReference>
<dbReference type="Proteomes" id="UP000000256">
    <property type="component" value="Chromosome"/>
</dbReference>
<dbReference type="GO" id="GO:0005737">
    <property type="term" value="C:cytoplasm"/>
    <property type="evidence" value="ECO:0007669"/>
    <property type="project" value="UniProtKB-SubCell"/>
</dbReference>
<dbReference type="GO" id="GO:0016832">
    <property type="term" value="F:aldehyde-lyase activity"/>
    <property type="evidence" value="ECO:0007669"/>
    <property type="project" value="InterPro"/>
</dbReference>
<dbReference type="GO" id="GO:0004801">
    <property type="term" value="F:transaldolase activity"/>
    <property type="evidence" value="ECO:0007669"/>
    <property type="project" value="UniProtKB-UniRule"/>
</dbReference>
<dbReference type="GO" id="GO:0005975">
    <property type="term" value="P:carbohydrate metabolic process"/>
    <property type="evidence" value="ECO:0007669"/>
    <property type="project" value="InterPro"/>
</dbReference>
<dbReference type="GO" id="GO:0006098">
    <property type="term" value="P:pentose-phosphate shunt"/>
    <property type="evidence" value="ECO:0007669"/>
    <property type="project" value="UniProtKB-UniRule"/>
</dbReference>
<dbReference type="CDD" id="cd00956">
    <property type="entry name" value="Transaldolase_FSA"/>
    <property type="match status" value="1"/>
</dbReference>
<dbReference type="FunFam" id="3.20.20.70:FF:000018">
    <property type="entry name" value="Probable transaldolase"/>
    <property type="match status" value="1"/>
</dbReference>
<dbReference type="Gene3D" id="3.20.20.70">
    <property type="entry name" value="Aldolase class I"/>
    <property type="match status" value="1"/>
</dbReference>
<dbReference type="HAMAP" id="MF_00494">
    <property type="entry name" value="Transaldolase_3b"/>
    <property type="match status" value="1"/>
</dbReference>
<dbReference type="InterPro" id="IPR013785">
    <property type="entry name" value="Aldolase_TIM"/>
</dbReference>
<dbReference type="InterPro" id="IPR001585">
    <property type="entry name" value="TAL/FSA"/>
</dbReference>
<dbReference type="InterPro" id="IPR022999">
    <property type="entry name" value="Transaldolase_3B"/>
</dbReference>
<dbReference type="InterPro" id="IPR004731">
    <property type="entry name" value="Transaldolase_3B/F6P_aldolase"/>
</dbReference>
<dbReference type="InterPro" id="IPR018225">
    <property type="entry name" value="Transaldolase_AS"/>
</dbReference>
<dbReference type="InterPro" id="IPR033919">
    <property type="entry name" value="TSA/FSA_arc/bac"/>
</dbReference>
<dbReference type="NCBIfam" id="TIGR00875">
    <property type="entry name" value="fsa_talC_mipB"/>
    <property type="match status" value="1"/>
</dbReference>
<dbReference type="PANTHER" id="PTHR10683">
    <property type="entry name" value="TRANSALDOLASE"/>
    <property type="match status" value="1"/>
</dbReference>
<dbReference type="PANTHER" id="PTHR10683:SF36">
    <property type="entry name" value="TRANSALDOLASE"/>
    <property type="match status" value="1"/>
</dbReference>
<dbReference type="Pfam" id="PF00923">
    <property type="entry name" value="TAL_FSA"/>
    <property type="match status" value="1"/>
</dbReference>
<dbReference type="SUPFAM" id="SSF51569">
    <property type="entry name" value="Aldolase"/>
    <property type="match status" value="1"/>
</dbReference>
<dbReference type="PROSITE" id="PS01054">
    <property type="entry name" value="TRANSALDOLASE_1"/>
    <property type="match status" value="1"/>
</dbReference>
<dbReference type="PROSITE" id="PS00958">
    <property type="entry name" value="TRANSALDOLASE_2"/>
    <property type="match status" value="1"/>
</dbReference>
<accession>A4XL36</accession>
<evidence type="ECO:0000255" key="1">
    <source>
        <dbReference type="HAMAP-Rule" id="MF_00494"/>
    </source>
</evidence>
<proteinExistence type="inferred from homology"/>